<comment type="function">
    <text evidence="1">Catalyzes the reversible transfer of the terminal phosphate group between ATP and AMP. Plays an important role in cellular energy homeostasis and in adenine nucleotide metabolism.</text>
</comment>
<comment type="catalytic activity">
    <reaction evidence="1">
        <text>AMP + ATP = 2 ADP</text>
        <dbReference type="Rhea" id="RHEA:12973"/>
        <dbReference type="ChEBI" id="CHEBI:30616"/>
        <dbReference type="ChEBI" id="CHEBI:456215"/>
        <dbReference type="ChEBI" id="CHEBI:456216"/>
        <dbReference type="EC" id="2.7.4.3"/>
    </reaction>
</comment>
<comment type="subunit">
    <text evidence="1">Monomer.</text>
</comment>
<comment type="subcellular location">
    <subcellularLocation>
        <location evidence="2">Cytoplasm</location>
    </subcellularLocation>
</comment>
<comment type="developmental stage">
    <text evidence="2">Expressed in late sporogonial stages.</text>
</comment>
<comment type="similarity">
    <text evidence="3">Belongs to the adenylate kinase family.</text>
</comment>
<name>KAD_ENCCU</name>
<protein>
    <recommendedName>
        <fullName>Adenylate kinase</fullName>
        <shortName>AK</shortName>
        <ecNumber>2.7.4.3</ecNumber>
    </recommendedName>
    <alternativeName>
        <fullName>ATP-AMP transphosphorylase</fullName>
    </alternativeName>
    <alternativeName>
        <fullName>ATP:AMP phosphotransferase</fullName>
    </alternativeName>
    <alternativeName>
        <fullName>Adenylate monophosphate kinase</fullName>
    </alternativeName>
</protein>
<accession>Q8SVC2</accession>
<sequence>MKYSRIVVMGPPGCGKGTQSSLISEKYEIPHVSSGDIIREEMKKSSKEATVIREMVNSGRLAPDEIVNELVLKKIRSMSKYILDGYPRRIEQAGMLGDDVDLVIFIDVDEDTCISRICGRNEGRDDDDEEVGRKRCMVYNKETAPVLEFYKRHGKLLTINGCASPGTVFEEIRRSIE</sequence>
<evidence type="ECO:0000250" key="1">
    <source>
        <dbReference type="UniProtKB" id="P69441"/>
    </source>
</evidence>
<evidence type="ECO:0000269" key="2">
    <source>
    </source>
</evidence>
<evidence type="ECO:0000305" key="3"/>
<proteinExistence type="evidence at protein level"/>
<gene>
    <name type="ordered locus">ECU06_0650</name>
</gene>
<feature type="chain" id="PRO_0000383113" description="Adenylate kinase">
    <location>
        <begin position="1"/>
        <end position="177"/>
    </location>
</feature>
<feature type="region of interest" description="NMP" evidence="1">
    <location>
        <begin position="33"/>
        <end position="62"/>
    </location>
</feature>
<feature type="region of interest" description="LID" evidence="1">
    <location>
        <begin position="119"/>
        <end position="127"/>
    </location>
</feature>
<feature type="binding site" evidence="1">
    <location>
        <begin position="13"/>
        <end position="18"/>
    </location>
    <ligand>
        <name>ATP</name>
        <dbReference type="ChEBI" id="CHEBI:30616"/>
    </ligand>
</feature>
<feature type="binding site" evidence="1">
    <location>
        <position position="34"/>
    </location>
    <ligand>
        <name>AMP</name>
        <dbReference type="ChEBI" id="CHEBI:456215"/>
    </ligand>
</feature>
<feature type="binding site" evidence="1">
    <location>
        <position position="39"/>
    </location>
    <ligand>
        <name>AMP</name>
        <dbReference type="ChEBI" id="CHEBI:456215"/>
    </ligand>
</feature>
<feature type="binding site" evidence="1">
    <location>
        <begin position="60"/>
        <end position="62"/>
    </location>
    <ligand>
        <name>AMP</name>
        <dbReference type="ChEBI" id="CHEBI:456215"/>
    </ligand>
</feature>
<feature type="binding site" evidence="1">
    <location>
        <begin position="85"/>
        <end position="88"/>
    </location>
    <ligand>
        <name>AMP</name>
        <dbReference type="ChEBI" id="CHEBI:456215"/>
    </ligand>
</feature>
<feature type="binding site" evidence="1">
    <location>
        <position position="92"/>
    </location>
    <ligand>
        <name>AMP</name>
        <dbReference type="ChEBI" id="CHEBI:456215"/>
    </ligand>
</feature>
<feature type="binding site" evidence="1">
    <location>
        <position position="120"/>
    </location>
    <ligand>
        <name>ATP</name>
        <dbReference type="ChEBI" id="CHEBI:30616"/>
    </ligand>
</feature>
<feature type="binding site" evidence="1">
    <location>
        <position position="124"/>
    </location>
    <ligand>
        <name>AMP</name>
        <dbReference type="ChEBI" id="CHEBI:456215"/>
    </ligand>
</feature>
<feature type="binding site" evidence="1">
    <location>
        <position position="135"/>
    </location>
    <ligand>
        <name>AMP</name>
        <dbReference type="ChEBI" id="CHEBI:456215"/>
    </ligand>
</feature>
<organism>
    <name type="scientific">Encephalitozoon cuniculi (strain GB-M1)</name>
    <name type="common">Microsporidian parasite</name>
    <dbReference type="NCBI Taxonomy" id="284813"/>
    <lineage>
        <taxon>Eukaryota</taxon>
        <taxon>Fungi</taxon>
        <taxon>Fungi incertae sedis</taxon>
        <taxon>Microsporidia</taxon>
        <taxon>Unikaryonidae</taxon>
        <taxon>Encephalitozoon</taxon>
    </lineage>
</organism>
<keyword id="KW-0067">ATP-binding</keyword>
<keyword id="KW-0963">Cytoplasm</keyword>
<keyword id="KW-0418">Kinase</keyword>
<keyword id="KW-0547">Nucleotide-binding</keyword>
<keyword id="KW-1185">Reference proteome</keyword>
<keyword id="KW-0808">Transferase</keyword>
<dbReference type="EC" id="2.7.4.3"/>
<dbReference type="EMBL" id="AL590446">
    <property type="protein sequence ID" value="CAD25425.2"/>
    <property type="molecule type" value="Genomic_DNA"/>
</dbReference>
<dbReference type="RefSeq" id="NP_585821.2">
    <property type="nucleotide sequence ID" value="NM_001041443.2"/>
</dbReference>
<dbReference type="SMR" id="Q8SVC2"/>
<dbReference type="FunCoup" id="Q8SVC2">
    <property type="interactions" value="99"/>
</dbReference>
<dbReference type="STRING" id="284813.Q8SVC2"/>
<dbReference type="GeneID" id="859245"/>
<dbReference type="KEGG" id="ecu:ECU06_0650"/>
<dbReference type="VEuPathDB" id="MicrosporidiaDB:ECU06_0650"/>
<dbReference type="HOGENOM" id="CLU_032354_1_2_1"/>
<dbReference type="InParanoid" id="Q8SVC2"/>
<dbReference type="OrthoDB" id="439792at2759"/>
<dbReference type="Proteomes" id="UP000000819">
    <property type="component" value="Chromosome VI"/>
</dbReference>
<dbReference type="GO" id="GO:0005737">
    <property type="term" value="C:cytoplasm"/>
    <property type="evidence" value="ECO:0007669"/>
    <property type="project" value="UniProtKB-SubCell"/>
</dbReference>
<dbReference type="GO" id="GO:0004017">
    <property type="term" value="F:adenylate kinase activity"/>
    <property type="evidence" value="ECO:0007669"/>
    <property type="project" value="UniProtKB-EC"/>
</dbReference>
<dbReference type="GO" id="GO:0005524">
    <property type="term" value="F:ATP binding"/>
    <property type="evidence" value="ECO:0007669"/>
    <property type="project" value="UniProtKB-KW"/>
</dbReference>
<dbReference type="CDD" id="cd01428">
    <property type="entry name" value="ADK"/>
    <property type="match status" value="1"/>
</dbReference>
<dbReference type="Gene3D" id="3.40.50.300">
    <property type="entry name" value="P-loop containing nucleotide triphosphate hydrolases"/>
    <property type="match status" value="1"/>
</dbReference>
<dbReference type="HAMAP" id="MF_00235">
    <property type="entry name" value="Adenylate_kinase_Adk"/>
    <property type="match status" value="1"/>
</dbReference>
<dbReference type="InterPro" id="IPR000850">
    <property type="entry name" value="Adenylat/UMP-CMP_kin"/>
</dbReference>
<dbReference type="InterPro" id="IPR033690">
    <property type="entry name" value="Adenylat_kinase_CS"/>
</dbReference>
<dbReference type="InterPro" id="IPR027417">
    <property type="entry name" value="P-loop_NTPase"/>
</dbReference>
<dbReference type="PANTHER" id="PTHR23359">
    <property type="entry name" value="NUCLEOTIDE KINASE"/>
    <property type="match status" value="1"/>
</dbReference>
<dbReference type="Pfam" id="PF00406">
    <property type="entry name" value="ADK"/>
    <property type="match status" value="1"/>
</dbReference>
<dbReference type="PRINTS" id="PR00094">
    <property type="entry name" value="ADENYLTKNASE"/>
</dbReference>
<dbReference type="SUPFAM" id="SSF52540">
    <property type="entry name" value="P-loop containing nucleoside triphosphate hydrolases"/>
    <property type="match status" value="1"/>
</dbReference>
<dbReference type="PROSITE" id="PS00113">
    <property type="entry name" value="ADENYLATE_KINASE"/>
    <property type="match status" value="1"/>
</dbReference>
<reference key="1">
    <citation type="journal article" date="2001" name="Nature">
        <title>Genome sequence and gene compaction of the eukaryote parasite Encephalitozoon cuniculi.</title>
        <authorList>
            <person name="Katinka M.D."/>
            <person name="Duprat S."/>
            <person name="Cornillot E."/>
            <person name="Metenier G."/>
            <person name="Thomarat F."/>
            <person name="Prensier G."/>
            <person name="Barbe V."/>
            <person name="Peyretaillade E."/>
            <person name="Brottier P."/>
            <person name="Wincker P."/>
            <person name="Delbac F."/>
            <person name="El Alaoui H."/>
            <person name="Peyret P."/>
            <person name="Saurin W."/>
            <person name="Gouy M."/>
            <person name="Weissenbach J."/>
            <person name="Vivares C.P."/>
        </authorList>
    </citation>
    <scope>NUCLEOTIDE SEQUENCE [LARGE SCALE GENOMIC DNA]</scope>
    <source>
        <strain>GB-M1</strain>
    </source>
</reference>
<reference key="2">
    <citation type="journal article" date="2009" name="BMC Genomics">
        <title>Identification of transcriptional signals in Encephalitozoon cuniculi widespread among Microsporidia phylum: support for accurate structural genome annotation.</title>
        <authorList>
            <person name="Peyretaillade E."/>
            <person name="Goncalves O."/>
            <person name="Terrat S."/>
            <person name="Dugat-Bony E."/>
            <person name="Wincker P."/>
            <person name="Cornman R.S."/>
            <person name="Evans J.D."/>
            <person name="Delbac F."/>
            <person name="Peyret P."/>
        </authorList>
    </citation>
    <scope>GENOME REANNOTATION</scope>
    <source>
        <strain>GB-M1</strain>
    </source>
</reference>
<reference key="3">
    <citation type="journal article" date="2006" name="Proteomics">
        <title>Proteomic analysis of the eukaryotic parasite Encephalitozoon cuniculi (microsporidia): a reference map for proteins expressed in late sporogonial stages.</title>
        <authorList>
            <person name="Brosson D."/>
            <person name="Kuhn L."/>
            <person name="Delbac F."/>
            <person name="Garin J."/>
            <person name="Vivares C.P."/>
            <person name="Texier C."/>
        </authorList>
    </citation>
    <scope>IDENTIFICATION BY MASS SPECTROMETRY [LARGE SCALE ANALYSIS]</scope>
    <scope>DEVELOPMENTAL STAGE</scope>
    <scope>SUBCELLULAR LOCATION</scope>
</reference>